<sequence length="831" mass="92189">MELSMFGREDTNSSQWGEVHGPFMLEEIVCQAQNMLTSRGIFMKSNPLKYALPLLLLQMSVIIVTSRLIFRVLQPLKQGMISAQVLTGVVLGPSFLGHNVIYMNMFLPAGGKIIIQTLSNVGFVIHLFLLGLKIDGSIIRKAGSKAILIGTASYAFPFSLGNLTIMFISKTMGLPSDVISCTSSAISLSSMTSFPVTTTVLAELNILNSELGRLATHCSMVCEVCSWFVALAFNLYTRDRTMTSLYALSMIIGLLLVIYFVFRPIIVWLTQRKTKSMDKKDVVPFFPVLLLLSIASLSGEAMGVHAAFGAFWLGVSLPDGPPLGTELAAKLEMFASNLFLPCFIAISGLQTNFFEITESHEHHVVMIEIILLITYGCKFLGTAAASAYCQTQIGDALCLAFLMCCQGIIEVYTTIVWKDAQVVDTECFNLVIITILFVTGISRFLVVYLYDPSKRYKSKSKRTILNTRQHNLQLRLLLGLYNVENVPSMVNLLEATYPTRFNPISFFTLHLVELKGRAHALLTPHHQMNKLDPNTAQSTHIVNAFQRFEQKYQGALMAQHFTAAAPYSSINNDICTLALDKKATLIVIPFHKQYAIDGTVGQVNGPIRTINLNVLDAAPCSVAIFIDRGETEGRRSVLMTNTWQNVAMLFIGGKDDAEALALCMRMAEKPDLNVTMIHFRHKSALQDEDYSDMSEYNLISDFKSYAANKGKIHYVEEIVRDGVETTQVISSLGDAYDMVLVGRDHDLESSVLYGLTDWSECPELGVIGDMLTSPDFHFSVLVVHQQQGDDLLAMDDSYKLPNVEHQKIGDTGIQQRFSAEEGFTTIDLGKR</sequence>
<gene>
    <name type="primary">CHX13</name>
    <name type="ordered locus">At2g30240</name>
    <name type="ORF">T27E13</name>
    <name type="ORF">T9D9.5</name>
</gene>
<proteinExistence type="evidence at protein level"/>
<keyword id="KW-1003">Cell membrane</keyword>
<keyword id="KW-0406">Ion transport</keyword>
<keyword id="KW-0472">Membrane</keyword>
<keyword id="KW-0630">Potassium</keyword>
<keyword id="KW-0633">Potassium transport</keyword>
<keyword id="KW-1185">Reference proteome</keyword>
<keyword id="KW-0769">Symport</keyword>
<keyword id="KW-0812">Transmembrane</keyword>
<keyword id="KW-1133">Transmembrane helix</keyword>
<keyword id="KW-0813">Transport</keyword>
<evidence type="ECO:0000255" key="1"/>
<evidence type="ECO:0000269" key="2">
    <source>
    </source>
</evidence>
<evidence type="ECO:0000269" key="3">
    <source>
    </source>
</evidence>
<evidence type="ECO:0000305" key="4"/>
<name>CHX13_ARATH</name>
<comment type="function">
    <text>High-affinity potassium transporter that plays a role in K(+) acquisition. May operate as a K(+)/H(+) symporter.</text>
</comment>
<comment type="biophysicochemical properties">
    <kinetics>
        <KM evidence="3">196 uM for K(+)</KM>
    </kinetics>
</comment>
<comment type="subcellular location">
    <subcellularLocation>
        <location evidence="3">Cell membrane</location>
        <topology evidence="3">Multi-pass membrane protein</topology>
    </subcellularLocation>
</comment>
<comment type="tissue specificity">
    <text evidence="2">Preferentially expressed in pollen before and after germination. Detected in pollen grains within anthers of the flower buds or in pollen on fully open flowers and on the stigma, and in pollen tubes growing in the style. Weakly expressed in roots.</text>
</comment>
<comment type="induction">
    <text evidence="3">Transiently induced by K(+) depletion.</text>
</comment>
<comment type="disruption phenotype">
    <text evidence="3">No visible phenotype under standard growth conditions, but growth inhibition and leaf chlorosis and bleaching under low K(+) conditions.</text>
</comment>
<comment type="miscellaneous">
    <text>K(+) uptake enhanced by a proton electrochemical gradient (acidic outside). Not affected by specific inhibitors of voltage-gated K(+) channels.</text>
</comment>
<comment type="similarity">
    <text evidence="4">Belongs to the monovalent cation:proton antiporter 2 (CPA2) transporter (TC 2.A.37) family. CHX (TC 2.A.37.4) subfamily.</text>
</comment>
<protein>
    <recommendedName>
        <fullName>Cation/H(+) symporter 13</fullName>
    </recommendedName>
    <alternativeName>
        <fullName>Protein CATION/H+ EXCHANGER 13</fullName>
        <shortName>AtCHX13</shortName>
    </alternativeName>
</protein>
<feature type="chain" id="PRO_0000378329" description="Cation/H(+) symporter 13">
    <location>
        <begin position="1"/>
        <end position="831"/>
    </location>
</feature>
<feature type="transmembrane region" description="Helical" evidence="1">
    <location>
        <begin position="50"/>
        <end position="70"/>
    </location>
</feature>
<feature type="transmembrane region" description="Helical" evidence="1">
    <location>
        <begin position="89"/>
        <end position="109"/>
    </location>
</feature>
<feature type="transmembrane region" description="Helical" evidence="1">
    <location>
        <begin position="112"/>
        <end position="132"/>
    </location>
</feature>
<feature type="transmembrane region" description="Helical" evidence="1">
    <location>
        <begin position="147"/>
        <end position="167"/>
    </location>
</feature>
<feature type="transmembrane region" description="Helical" evidence="1">
    <location>
        <begin position="214"/>
        <end position="234"/>
    </location>
</feature>
<feature type="transmembrane region" description="Helical" evidence="1">
    <location>
        <begin position="250"/>
        <end position="270"/>
    </location>
</feature>
<feature type="transmembrane region" description="Helical" evidence="1">
    <location>
        <begin position="282"/>
        <end position="302"/>
    </location>
</feature>
<feature type="transmembrane region" description="Helical" evidence="1">
    <location>
        <begin position="303"/>
        <end position="323"/>
    </location>
</feature>
<feature type="transmembrane region" description="Helical" evidence="1">
    <location>
        <begin position="334"/>
        <end position="354"/>
    </location>
</feature>
<feature type="transmembrane region" description="Helical" evidence="1">
    <location>
        <begin position="364"/>
        <end position="384"/>
    </location>
</feature>
<feature type="transmembrane region" description="Helical" evidence="1">
    <location>
        <begin position="397"/>
        <end position="417"/>
    </location>
</feature>
<feature type="transmembrane region" description="Helical" evidence="1">
    <location>
        <begin position="430"/>
        <end position="450"/>
    </location>
</feature>
<dbReference type="EMBL" id="EF571901">
    <property type="protein sequence ID" value="AAX49543.2"/>
    <property type="molecule type" value="mRNA"/>
</dbReference>
<dbReference type="EMBL" id="AC002338">
    <property type="protein sequence ID" value="AAC16929.1"/>
    <property type="molecule type" value="Genomic_DNA"/>
</dbReference>
<dbReference type="EMBL" id="AC004165">
    <property type="protein sequence ID" value="AAM14917.1"/>
    <property type="molecule type" value="Genomic_DNA"/>
</dbReference>
<dbReference type="EMBL" id="CP002685">
    <property type="protein sequence ID" value="AEC08361.1"/>
    <property type="molecule type" value="Genomic_DNA"/>
</dbReference>
<dbReference type="PIR" id="T00576">
    <property type="entry name" value="T00576"/>
</dbReference>
<dbReference type="RefSeq" id="NP_180583.1">
    <property type="nucleotide sequence ID" value="NM_128577.2"/>
</dbReference>
<dbReference type="SMR" id="O22920"/>
<dbReference type="FunCoup" id="O22920">
    <property type="interactions" value="2"/>
</dbReference>
<dbReference type="STRING" id="3702.O22920"/>
<dbReference type="TCDB" id="2.A.37.4.3">
    <property type="family name" value="the monovalent cation:proton antiporter-2 (cpa2) family"/>
</dbReference>
<dbReference type="iPTMnet" id="O22920"/>
<dbReference type="MetOSite" id="O22920"/>
<dbReference type="PaxDb" id="3702-AT2G30240.1"/>
<dbReference type="ProteomicsDB" id="246969"/>
<dbReference type="EnsemblPlants" id="AT2G30240.1">
    <property type="protein sequence ID" value="AT2G30240.1"/>
    <property type="gene ID" value="AT2G30240"/>
</dbReference>
<dbReference type="GeneID" id="817574"/>
<dbReference type="Gramene" id="AT2G30240.1">
    <property type="protein sequence ID" value="AT2G30240.1"/>
    <property type="gene ID" value="AT2G30240"/>
</dbReference>
<dbReference type="KEGG" id="ath:AT2G30240"/>
<dbReference type="Araport" id="AT2G30240"/>
<dbReference type="TAIR" id="AT2G30240">
    <property type="gene designation" value="ATCHX13"/>
</dbReference>
<dbReference type="eggNOG" id="KOG1650">
    <property type="taxonomic scope" value="Eukaryota"/>
</dbReference>
<dbReference type="HOGENOM" id="CLU_005126_6_2_1"/>
<dbReference type="InParanoid" id="O22920"/>
<dbReference type="OMA" id="LMTNTWQ"/>
<dbReference type="PhylomeDB" id="O22920"/>
<dbReference type="SABIO-RK" id="O22920"/>
<dbReference type="PRO" id="PR:O22920"/>
<dbReference type="Proteomes" id="UP000006548">
    <property type="component" value="Chromosome 2"/>
</dbReference>
<dbReference type="ExpressionAtlas" id="O22920">
    <property type="expression patterns" value="baseline and differential"/>
</dbReference>
<dbReference type="GO" id="GO:0005886">
    <property type="term" value="C:plasma membrane"/>
    <property type="evidence" value="ECO:0000314"/>
    <property type="project" value="TAIR"/>
</dbReference>
<dbReference type="GO" id="GO:0015297">
    <property type="term" value="F:antiporter activity"/>
    <property type="evidence" value="ECO:0007669"/>
    <property type="project" value="InterPro"/>
</dbReference>
<dbReference type="GO" id="GO:0015079">
    <property type="term" value="F:potassium ion transmembrane transporter activity"/>
    <property type="evidence" value="ECO:0000314"/>
    <property type="project" value="TAIR"/>
</dbReference>
<dbReference type="GO" id="GO:0015293">
    <property type="term" value="F:symporter activity"/>
    <property type="evidence" value="ECO:0007669"/>
    <property type="project" value="UniProtKB-KW"/>
</dbReference>
<dbReference type="GO" id="GO:1902600">
    <property type="term" value="P:proton transmembrane transport"/>
    <property type="evidence" value="ECO:0007669"/>
    <property type="project" value="InterPro"/>
</dbReference>
<dbReference type="FunFam" id="1.20.1530.20:FF:000042">
    <property type="entry name" value="Cation/H(+) antiporter 14"/>
    <property type="match status" value="1"/>
</dbReference>
<dbReference type="Gene3D" id="1.20.1530.20">
    <property type="match status" value="1"/>
</dbReference>
<dbReference type="InterPro" id="IPR006153">
    <property type="entry name" value="Cation/H_exchanger_TM"/>
</dbReference>
<dbReference type="InterPro" id="IPR050794">
    <property type="entry name" value="CPA2_transporter"/>
</dbReference>
<dbReference type="InterPro" id="IPR038770">
    <property type="entry name" value="Na+/solute_symporter_sf"/>
</dbReference>
<dbReference type="PANTHER" id="PTHR32468">
    <property type="entry name" value="CATION/H + ANTIPORTER"/>
    <property type="match status" value="1"/>
</dbReference>
<dbReference type="PANTHER" id="PTHR32468:SF119">
    <property type="entry name" value="CATION_H(+) SYMPORTER 13"/>
    <property type="match status" value="1"/>
</dbReference>
<dbReference type="Pfam" id="PF23256">
    <property type="entry name" value="CHX17_2nd"/>
    <property type="match status" value="1"/>
</dbReference>
<dbReference type="Pfam" id="PF23259">
    <property type="entry name" value="CHX17_C"/>
    <property type="match status" value="1"/>
</dbReference>
<dbReference type="Pfam" id="PF00999">
    <property type="entry name" value="Na_H_Exchanger"/>
    <property type="match status" value="1"/>
</dbReference>
<reference key="1">
    <citation type="journal article" date="2004" name="Plant Physiol.">
        <title>Expression patterns of a novel AtCHX gene family highlight potential roles in osmotic adjustment and K+ homeostasis in pollen development.</title>
        <authorList>
            <person name="Sze H."/>
            <person name="Padmanaban S."/>
            <person name="Cellier F."/>
            <person name="Honys D."/>
            <person name="Cheng N.-H."/>
            <person name="Bock K.W."/>
            <person name="Conejero G."/>
            <person name="Li X."/>
            <person name="Twell D."/>
            <person name="Ward J.M."/>
            <person name="Hirschi K.D."/>
        </authorList>
    </citation>
    <scope>NUCLEOTIDE SEQUENCE [MRNA]</scope>
    <scope>TISSUE SPECIFICITY</scope>
    <scope>GENE FAMILY</scope>
    <scope>NOMENCLATURE</scope>
    <source>
        <tissue>Pollen</tissue>
    </source>
</reference>
<reference key="2">
    <citation type="journal article" date="2008" name="Plant Physiol.">
        <title>AtCHX13 is a plasma membrane K+ transporter.</title>
        <authorList>
            <person name="Zhao J."/>
            <person name="Cheng N.-H."/>
            <person name="Motes C.M."/>
            <person name="Blancaflor E.B."/>
            <person name="Moore M."/>
            <person name="Gonzales N."/>
            <person name="Padmanaban S."/>
            <person name="Sze H."/>
            <person name="Ward J.M."/>
            <person name="Hirschi K.D."/>
        </authorList>
    </citation>
    <scope>SEQUENCE REVISION</scope>
    <scope>SUBCELLULAR LOCATION</scope>
    <scope>INDUCTION</scope>
    <scope>BIOPHYSICOCHEMICAL PROPERTIES</scope>
    <scope>DISRUPTION PHENOTYPE</scope>
    <source>
        <strain>cv. Columbia</strain>
    </source>
</reference>
<reference key="3">
    <citation type="journal article" date="1999" name="Nature">
        <title>Sequence and analysis of chromosome 2 of the plant Arabidopsis thaliana.</title>
        <authorList>
            <person name="Lin X."/>
            <person name="Kaul S."/>
            <person name="Rounsley S.D."/>
            <person name="Shea T.P."/>
            <person name="Benito M.-I."/>
            <person name="Town C.D."/>
            <person name="Fujii C.Y."/>
            <person name="Mason T.M."/>
            <person name="Bowman C.L."/>
            <person name="Barnstead M.E."/>
            <person name="Feldblyum T.V."/>
            <person name="Buell C.R."/>
            <person name="Ketchum K.A."/>
            <person name="Lee J.J."/>
            <person name="Ronning C.M."/>
            <person name="Koo H.L."/>
            <person name="Moffat K.S."/>
            <person name="Cronin L.A."/>
            <person name="Shen M."/>
            <person name="Pai G."/>
            <person name="Van Aken S."/>
            <person name="Umayam L."/>
            <person name="Tallon L.J."/>
            <person name="Gill J.E."/>
            <person name="Adams M.D."/>
            <person name="Carrera A.J."/>
            <person name="Creasy T.H."/>
            <person name="Goodman H.M."/>
            <person name="Somerville C.R."/>
            <person name="Copenhaver G.P."/>
            <person name="Preuss D."/>
            <person name="Nierman W.C."/>
            <person name="White O."/>
            <person name="Eisen J.A."/>
            <person name="Salzberg S.L."/>
            <person name="Fraser C.M."/>
            <person name="Venter J.C."/>
        </authorList>
    </citation>
    <scope>NUCLEOTIDE SEQUENCE [LARGE SCALE GENOMIC DNA]</scope>
    <source>
        <strain>cv. Columbia</strain>
    </source>
</reference>
<reference key="4">
    <citation type="journal article" date="2017" name="Plant J.">
        <title>Araport11: a complete reannotation of the Arabidopsis thaliana reference genome.</title>
        <authorList>
            <person name="Cheng C.Y."/>
            <person name="Krishnakumar V."/>
            <person name="Chan A.P."/>
            <person name="Thibaud-Nissen F."/>
            <person name="Schobel S."/>
            <person name="Town C.D."/>
        </authorList>
    </citation>
    <scope>GENOME REANNOTATION</scope>
    <source>
        <strain>cv. Columbia</strain>
    </source>
</reference>
<reference key="5">
    <citation type="journal article" date="2001" name="Plant Physiol.">
        <title>Phylogenetic relationships within cation transporter families of Arabidopsis.</title>
        <authorList>
            <person name="Maeser P."/>
            <person name="Thomine S."/>
            <person name="Schroeder J.I."/>
            <person name="Ward J.M."/>
            <person name="Hirschi K."/>
            <person name="Sze H."/>
            <person name="Talke I.N."/>
            <person name="Amtmann A."/>
            <person name="Maathuis F.J.M."/>
            <person name="Sanders D."/>
            <person name="Harper J.F."/>
            <person name="Tchieu J."/>
            <person name="Gribskov M."/>
            <person name="Persans M.W."/>
            <person name="Salt D.E."/>
            <person name="Kim S.A."/>
            <person name="Guerinot M.L."/>
        </authorList>
    </citation>
    <scope>GENE FAMILY</scope>
    <scope>NOMENCLATURE</scope>
</reference>
<organism>
    <name type="scientific">Arabidopsis thaliana</name>
    <name type="common">Mouse-ear cress</name>
    <dbReference type="NCBI Taxonomy" id="3702"/>
    <lineage>
        <taxon>Eukaryota</taxon>
        <taxon>Viridiplantae</taxon>
        <taxon>Streptophyta</taxon>
        <taxon>Embryophyta</taxon>
        <taxon>Tracheophyta</taxon>
        <taxon>Spermatophyta</taxon>
        <taxon>Magnoliopsida</taxon>
        <taxon>eudicotyledons</taxon>
        <taxon>Gunneridae</taxon>
        <taxon>Pentapetalae</taxon>
        <taxon>rosids</taxon>
        <taxon>malvids</taxon>
        <taxon>Brassicales</taxon>
        <taxon>Brassicaceae</taxon>
        <taxon>Camelineae</taxon>
        <taxon>Arabidopsis</taxon>
    </lineage>
</organism>
<accession>O22920</accession>
<accession>Q58P68</accession>